<comment type="function">
    <text evidence="3">Anti-inflammatory antagonist of interleukin-1 family of proinflammatory cytokines such as interleukin-1beta/IL1B and interleukin-1alpha/IL1A. Protects from immune dysregulation and uncontrolled systemic inflammation triggered by IL1 for a range of innate stimulatory agents such as pathogens.</text>
</comment>
<comment type="subcellular location">
    <subcellularLocation>
        <location evidence="2">Secreted</location>
    </subcellularLocation>
</comment>
<comment type="similarity">
    <text evidence="5">Belongs to the IL-1 family.</text>
</comment>
<sequence length="177" mass="19923">MEVCRCHHGYLISLLLFLFHSETACYPLGKRPCEMQAFRIWDVNQKTFYLRNNQLVAGYLQGPNTKLEEKIDVVPIEPHAMFLGIHGGKLCLACVKSGDEIKLGLEPVNITDLNSSKEEDKRFAFIRSDSGPTTSFESAACPGWFLCTALETDQPVGLTNTPQDAVQVTKFYFQQDQ</sequence>
<gene>
    <name type="primary">IL1RN</name>
    <name type="synonym">IL1RA</name>
</gene>
<evidence type="ECO:0000250" key="1"/>
<evidence type="ECO:0000250" key="2">
    <source>
        <dbReference type="UniProtKB" id="P18510"/>
    </source>
</evidence>
<evidence type="ECO:0000250" key="3">
    <source>
        <dbReference type="UniProtKB" id="P25085"/>
    </source>
</evidence>
<evidence type="ECO:0000255" key="4"/>
<evidence type="ECO:0000305" key="5"/>
<name>IL1RA_TURTR</name>
<dbReference type="EMBL" id="AB038268">
    <property type="protein sequence ID" value="BAB11806.1"/>
    <property type="molecule type" value="mRNA"/>
</dbReference>
<dbReference type="RefSeq" id="NP_001267549.1">
    <property type="nucleotide sequence ID" value="NM_001280620.1"/>
</dbReference>
<dbReference type="SMR" id="Q9GMZ4"/>
<dbReference type="FunCoup" id="Q9GMZ4">
    <property type="interactions" value="39"/>
</dbReference>
<dbReference type="STRING" id="9739.ENSTTRP00000011234"/>
<dbReference type="GlyCosmos" id="Q9GMZ4">
    <property type="glycosylation" value="2 sites, No reported glycans"/>
</dbReference>
<dbReference type="GeneID" id="101328434"/>
<dbReference type="CTD" id="3557"/>
<dbReference type="InParanoid" id="Q9GMZ4"/>
<dbReference type="OrthoDB" id="9274793at2759"/>
<dbReference type="Proteomes" id="UP000245320">
    <property type="component" value="Chromosome 14"/>
</dbReference>
<dbReference type="GO" id="GO:0005615">
    <property type="term" value="C:extracellular space"/>
    <property type="evidence" value="ECO:0007669"/>
    <property type="project" value="InterPro"/>
</dbReference>
<dbReference type="GO" id="GO:0005125">
    <property type="term" value="F:cytokine activity"/>
    <property type="evidence" value="ECO:0007669"/>
    <property type="project" value="InterPro"/>
</dbReference>
<dbReference type="GO" id="GO:0005152">
    <property type="term" value="F:interleukin-1 receptor antagonist activity"/>
    <property type="evidence" value="ECO:0007669"/>
    <property type="project" value="TreeGrafter"/>
</dbReference>
<dbReference type="GO" id="GO:0005149">
    <property type="term" value="F:interleukin-1 receptor binding"/>
    <property type="evidence" value="ECO:0007669"/>
    <property type="project" value="InterPro"/>
</dbReference>
<dbReference type="GO" id="GO:0002437">
    <property type="term" value="P:inflammatory response to antigenic stimulus"/>
    <property type="evidence" value="ECO:0007669"/>
    <property type="project" value="TreeGrafter"/>
</dbReference>
<dbReference type="GO" id="GO:2000660">
    <property type="term" value="P:negative regulation of interleukin-1-mediated signaling pathway"/>
    <property type="evidence" value="ECO:0007669"/>
    <property type="project" value="TreeGrafter"/>
</dbReference>
<dbReference type="FunFam" id="2.80.10.50:FF:000013">
    <property type="entry name" value="Interleukin-1"/>
    <property type="match status" value="1"/>
</dbReference>
<dbReference type="Gene3D" id="2.80.10.50">
    <property type="match status" value="1"/>
</dbReference>
<dbReference type="InterPro" id="IPR020877">
    <property type="entry name" value="IL-1_CS"/>
</dbReference>
<dbReference type="InterPro" id="IPR000975">
    <property type="entry name" value="IL-1_fam"/>
</dbReference>
<dbReference type="InterPro" id="IPR003297">
    <property type="entry name" value="IL-1RA/IL-36"/>
</dbReference>
<dbReference type="InterPro" id="IPR008996">
    <property type="entry name" value="IL1/FGF"/>
</dbReference>
<dbReference type="PANTHER" id="PTHR10078">
    <property type="entry name" value="INTERLEUKIN-1 FAMILY MEMBER"/>
    <property type="match status" value="1"/>
</dbReference>
<dbReference type="PANTHER" id="PTHR10078:SF28">
    <property type="entry name" value="INTERLEUKIN-1 RECEPTOR ANTAGONIST PROTEIN"/>
    <property type="match status" value="1"/>
</dbReference>
<dbReference type="Pfam" id="PF00340">
    <property type="entry name" value="IL1"/>
    <property type="match status" value="1"/>
</dbReference>
<dbReference type="PRINTS" id="PR00264">
    <property type="entry name" value="INTERLEUKIN1"/>
</dbReference>
<dbReference type="PRINTS" id="PR01360">
    <property type="entry name" value="INTRLEUKIN1X"/>
</dbReference>
<dbReference type="SMART" id="SM00125">
    <property type="entry name" value="IL1"/>
    <property type="match status" value="1"/>
</dbReference>
<dbReference type="SUPFAM" id="SSF50353">
    <property type="entry name" value="Cytokine"/>
    <property type="match status" value="1"/>
</dbReference>
<dbReference type="PROSITE" id="PS00253">
    <property type="entry name" value="INTERLEUKIN_1"/>
    <property type="match status" value="1"/>
</dbReference>
<organism>
    <name type="scientific">Tursiops truncatus</name>
    <name type="common">Atlantic bottle-nosed dolphin</name>
    <name type="synonym">Delphinus truncatus</name>
    <dbReference type="NCBI Taxonomy" id="9739"/>
    <lineage>
        <taxon>Eukaryota</taxon>
        <taxon>Metazoa</taxon>
        <taxon>Chordata</taxon>
        <taxon>Craniata</taxon>
        <taxon>Vertebrata</taxon>
        <taxon>Euteleostomi</taxon>
        <taxon>Mammalia</taxon>
        <taxon>Eutheria</taxon>
        <taxon>Laurasiatheria</taxon>
        <taxon>Artiodactyla</taxon>
        <taxon>Whippomorpha</taxon>
        <taxon>Cetacea</taxon>
        <taxon>Odontoceti</taxon>
        <taxon>Delphinidae</taxon>
        <taxon>Tursiops</taxon>
    </lineage>
</organism>
<reference key="1">
    <citation type="journal article" date="2001" name="Vet. Immunol. Immunopathol.">
        <title>Molecular cloning and functional expression of bottle-nosed dolphin (Tursiops truncatus) interleukin-1 receptor antagonist.</title>
        <authorList>
            <person name="Inoue Y."/>
            <person name="Itou T."/>
            <person name="Jimbo T."/>
            <person name="Syouji Y."/>
            <person name="Ueda K."/>
            <person name="Sakai T."/>
        </authorList>
    </citation>
    <scope>NUCLEOTIDE SEQUENCE [MRNA]</scope>
</reference>
<proteinExistence type="evidence at transcript level"/>
<feature type="signal peptide" evidence="4">
    <location>
        <begin position="1"/>
        <end position="25"/>
    </location>
</feature>
<feature type="chain" id="PRO_0000015334" description="Interleukin-1 receptor antagonist protein">
    <location>
        <begin position="26"/>
        <end position="177"/>
    </location>
</feature>
<feature type="glycosylation site" description="N-linked (GlcNAc...) asparagine" evidence="4">
    <location>
        <position position="109"/>
    </location>
</feature>
<feature type="glycosylation site" description="N-linked (GlcNAc...) asparagine" evidence="4">
    <location>
        <position position="114"/>
    </location>
</feature>
<feature type="disulfide bond" evidence="1">
    <location>
        <begin position="91"/>
        <end position="141"/>
    </location>
</feature>
<protein>
    <recommendedName>
        <fullName>Interleukin-1 receptor antagonist protein</fullName>
        <shortName>IL-1RN</shortName>
        <shortName>IL-1ra</shortName>
        <shortName>IRAP</shortName>
    </recommendedName>
    <alternativeName>
        <fullName>IL1 inhibitor</fullName>
    </alternativeName>
</protein>
<accession>Q9GMZ4</accession>
<keyword id="KW-1015">Disulfide bond</keyword>
<keyword id="KW-0325">Glycoprotein</keyword>
<keyword id="KW-1185">Reference proteome</keyword>
<keyword id="KW-0964">Secreted</keyword>
<keyword id="KW-0732">Signal</keyword>